<dbReference type="EC" id="1.6.5.-" evidence="1"/>
<dbReference type="EC" id="1.7.1.17" evidence="1"/>
<dbReference type="EMBL" id="BA000030">
    <property type="protein sequence ID" value="BAC72056.1"/>
    <property type="molecule type" value="Genomic_DNA"/>
</dbReference>
<dbReference type="RefSeq" id="WP_010985769.1">
    <property type="nucleotide sequence ID" value="NZ_JZJK01000079.1"/>
</dbReference>
<dbReference type="SMR" id="Q82FB5"/>
<dbReference type="GeneID" id="41541427"/>
<dbReference type="KEGG" id="sma:SAVERM_4344"/>
<dbReference type="eggNOG" id="COG1182">
    <property type="taxonomic scope" value="Bacteria"/>
</dbReference>
<dbReference type="HOGENOM" id="CLU_088964_0_1_11"/>
<dbReference type="OrthoDB" id="9805013at2"/>
<dbReference type="Proteomes" id="UP000000428">
    <property type="component" value="Chromosome"/>
</dbReference>
<dbReference type="GO" id="GO:0009055">
    <property type="term" value="F:electron transfer activity"/>
    <property type="evidence" value="ECO:0007669"/>
    <property type="project" value="UniProtKB-UniRule"/>
</dbReference>
<dbReference type="GO" id="GO:0010181">
    <property type="term" value="F:FMN binding"/>
    <property type="evidence" value="ECO:0007669"/>
    <property type="project" value="UniProtKB-UniRule"/>
</dbReference>
<dbReference type="GO" id="GO:0016652">
    <property type="term" value="F:oxidoreductase activity, acting on NAD(P)H as acceptor"/>
    <property type="evidence" value="ECO:0007669"/>
    <property type="project" value="UniProtKB-UniRule"/>
</dbReference>
<dbReference type="GO" id="GO:0016655">
    <property type="term" value="F:oxidoreductase activity, acting on NAD(P)H, quinone or similar compound as acceptor"/>
    <property type="evidence" value="ECO:0007669"/>
    <property type="project" value="InterPro"/>
</dbReference>
<dbReference type="Gene3D" id="3.40.50.360">
    <property type="match status" value="1"/>
</dbReference>
<dbReference type="HAMAP" id="MF_01216">
    <property type="entry name" value="Azoreductase_type1"/>
    <property type="match status" value="1"/>
</dbReference>
<dbReference type="InterPro" id="IPR003680">
    <property type="entry name" value="Flavodoxin_fold"/>
</dbReference>
<dbReference type="InterPro" id="IPR029039">
    <property type="entry name" value="Flavoprotein-like_sf"/>
</dbReference>
<dbReference type="InterPro" id="IPR050104">
    <property type="entry name" value="FMN-dep_NADH:Q_OxRdtase_AzoR1"/>
</dbReference>
<dbReference type="InterPro" id="IPR023048">
    <property type="entry name" value="NADH:quinone_OxRdtase_FMN_depd"/>
</dbReference>
<dbReference type="PANTHER" id="PTHR43741">
    <property type="entry name" value="FMN-DEPENDENT NADH-AZOREDUCTASE 1"/>
    <property type="match status" value="1"/>
</dbReference>
<dbReference type="PANTHER" id="PTHR43741:SF4">
    <property type="entry name" value="FMN-DEPENDENT NADH:QUINONE OXIDOREDUCTASE"/>
    <property type="match status" value="1"/>
</dbReference>
<dbReference type="Pfam" id="PF02525">
    <property type="entry name" value="Flavodoxin_2"/>
    <property type="match status" value="1"/>
</dbReference>
<dbReference type="SUPFAM" id="SSF52218">
    <property type="entry name" value="Flavoproteins"/>
    <property type="match status" value="1"/>
</dbReference>
<keyword id="KW-0285">Flavoprotein</keyword>
<keyword id="KW-0288">FMN</keyword>
<keyword id="KW-0520">NAD</keyword>
<keyword id="KW-0560">Oxidoreductase</keyword>
<keyword id="KW-1185">Reference proteome</keyword>
<evidence type="ECO:0000255" key="1">
    <source>
        <dbReference type="HAMAP-Rule" id="MF_01216"/>
    </source>
</evidence>
<sequence length="217" mass="23067">MATLLHIDSSVFPSAASASRAVAETFRTAWQEQHPDGTVIYRDLSANPVPHITADAHTAGFADPATHTPGQAAAFAEREKLIAELEQADAVLIGAPMYNYAIPSTLKAWLDNVILMGRTAANENSKVTGTPVTVIASRGGSYAPGTPREPYEYVQNYLKAVLSDALGLELEFIVPELTMAAHNPAMSELVPLAEASRAKAHEDAAAKAKELADRFAA</sequence>
<protein>
    <recommendedName>
        <fullName evidence="1">FMN-dependent NADH:quinone oxidoreductase</fullName>
        <ecNumber evidence="1">1.6.5.-</ecNumber>
    </recommendedName>
    <alternativeName>
        <fullName evidence="1">Azo-dye reductase</fullName>
    </alternativeName>
    <alternativeName>
        <fullName evidence="1">FMN-dependent NADH-azo compound oxidoreductase</fullName>
    </alternativeName>
    <alternativeName>
        <fullName evidence="1">FMN-dependent NADH-azoreductase</fullName>
        <ecNumber evidence="1">1.7.1.17</ecNumber>
    </alternativeName>
</protein>
<proteinExistence type="inferred from homology"/>
<gene>
    <name evidence="1" type="primary">azoR</name>
    <name type="ordered locus">SAV_4344</name>
</gene>
<accession>Q82FB5</accession>
<reference key="1">
    <citation type="journal article" date="2001" name="Proc. Natl. Acad. Sci. U.S.A.">
        <title>Genome sequence of an industrial microorganism Streptomyces avermitilis: deducing the ability of producing secondary metabolites.</title>
        <authorList>
            <person name="Omura S."/>
            <person name="Ikeda H."/>
            <person name="Ishikawa J."/>
            <person name="Hanamoto A."/>
            <person name="Takahashi C."/>
            <person name="Shinose M."/>
            <person name="Takahashi Y."/>
            <person name="Horikawa H."/>
            <person name="Nakazawa H."/>
            <person name="Osonoe T."/>
            <person name="Kikuchi H."/>
            <person name="Shiba T."/>
            <person name="Sakaki Y."/>
            <person name="Hattori M."/>
        </authorList>
    </citation>
    <scope>NUCLEOTIDE SEQUENCE [LARGE SCALE GENOMIC DNA]</scope>
    <source>
        <strain>ATCC 31267 / DSM 46492 / JCM 5070 / NBRC 14893 / NCIMB 12804 / NRRL 8165 / MA-4680</strain>
    </source>
</reference>
<reference key="2">
    <citation type="journal article" date="2003" name="Nat. Biotechnol.">
        <title>Complete genome sequence and comparative analysis of the industrial microorganism Streptomyces avermitilis.</title>
        <authorList>
            <person name="Ikeda H."/>
            <person name="Ishikawa J."/>
            <person name="Hanamoto A."/>
            <person name="Shinose M."/>
            <person name="Kikuchi H."/>
            <person name="Shiba T."/>
            <person name="Sakaki Y."/>
            <person name="Hattori M."/>
            <person name="Omura S."/>
        </authorList>
    </citation>
    <scope>NUCLEOTIDE SEQUENCE [LARGE SCALE GENOMIC DNA]</scope>
    <source>
        <strain>ATCC 31267 / DSM 46492 / JCM 5070 / NBRC 14893 / NCIMB 12804 / NRRL 8165 / MA-4680</strain>
    </source>
</reference>
<comment type="function">
    <text evidence="1">Quinone reductase that provides resistance to thiol-specific stress caused by electrophilic quinones.</text>
</comment>
<comment type="function">
    <text evidence="1">Also exhibits azoreductase activity. Catalyzes the reductive cleavage of the azo bond in aromatic azo compounds to the corresponding amines.</text>
</comment>
<comment type="catalytic activity">
    <reaction evidence="1">
        <text>2 a quinone + NADH + H(+) = 2 a 1,4-benzosemiquinone + NAD(+)</text>
        <dbReference type="Rhea" id="RHEA:65952"/>
        <dbReference type="ChEBI" id="CHEBI:15378"/>
        <dbReference type="ChEBI" id="CHEBI:57540"/>
        <dbReference type="ChEBI" id="CHEBI:57945"/>
        <dbReference type="ChEBI" id="CHEBI:132124"/>
        <dbReference type="ChEBI" id="CHEBI:134225"/>
    </reaction>
</comment>
<comment type="catalytic activity">
    <reaction evidence="1">
        <text>N,N-dimethyl-1,4-phenylenediamine + anthranilate + 2 NAD(+) = 2-(4-dimethylaminophenyl)diazenylbenzoate + 2 NADH + 2 H(+)</text>
        <dbReference type="Rhea" id="RHEA:55872"/>
        <dbReference type="ChEBI" id="CHEBI:15378"/>
        <dbReference type="ChEBI" id="CHEBI:15783"/>
        <dbReference type="ChEBI" id="CHEBI:16567"/>
        <dbReference type="ChEBI" id="CHEBI:57540"/>
        <dbReference type="ChEBI" id="CHEBI:57945"/>
        <dbReference type="ChEBI" id="CHEBI:71579"/>
        <dbReference type="EC" id="1.7.1.17"/>
    </reaction>
</comment>
<comment type="cofactor">
    <cofactor evidence="1">
        <name>FMN</name>
        <dbReference type="ChEBI" id="CHEBI:58210"/>
    </cofactor>
    <text evidence="1">Binds 1 FMN per subunit.</text>
</comment>
<comment type="subunit">
    <text evidence="1">Homodimer.</text>
</comment>
<comment type="similarity">
    <text evidence="1">Belongs to the azoreductase type 1 family.</text>
</comment>
<name>AZOR_STRAW</name>
<organism>
    <name type="scientific">Streptomyces avermitilis (strain ATCC 31267 / DSM 46492 / JCM 5070 / NBRC 14893 / NCIMB 12804 / NRRL 8165 / MA-4680)</name>
    <dbReference type="NCBI Taxonomy" id="227882"/>
    <lineage>
        <taxon>Bacteria</taxon>
        <taxon>Bacillati</taxon>
        <taxon>Actinomycetota</taxon>
        <taxon>Actinomycetes</taxon>
        <taxon>Kitasatosporales</taxon>
        <taxon>Streptomycetaceae</taxon>
        <taxon>Streptomyces</taxon>
    </lineage>
</organism>
<feature type="chain" id="PRO_0000245981" description="FMN-dependent NADH:quinone oxidoreductase">
    <location>
        <begin position="1"/>
        <end position="217"/>
    </location>
</feature>
<feature type="binding site" evidence="1">
    <location>
        <position position="10"/>
    </location>
    <ligand>
        <name>FMN</name>
        <dbReference type="ChEBI" id="CHEBI:58210"/>
    </ligand>
</feature>
<feature type="binding site" evidence="1">
    <location>
        <begin position="17"/>
        <end position="19"/>
    </location>
    <ligand>
        <name>FMN</name>
        <dbReference type="ChEBI" id="CHEBI:58210"/>
    </ligand>
</feature>
<feature type="binding site" evidence="1">
    <location>
        <begin position="137"/>
        <end position="140"/>
    </location>
    <ligand>
        <name>FMN</name>
        <dbReference type="ChEBI" id="CHEBI:58210"/>
    </ligand>
</feature>